<keyword id="KW-0963">Cytoplasm</keyword>
<keyword id="KW-0489">Methyltransferase</keyword>
<keyword id="KW-1185">Reference proteome</keyword>
<keyword id="KW-0698">rRNA processing</keyword>
<keyword id="KW-0949">S-adenosyl-L-methionine</keyword>
<keyword id="KW-0808">Transferase</keyword>
<name>RLME_PARXL</name>
<feature type="chain" id="PRO_0000282738" description="Ribosomal RNA large subunit methyltransferase E">
    <location>
        <begin position="1"/>
        <end position="220"/>
    </location>
</feature>
<feature type="active site" description="Proton acceptor" evidence="1">
    <location>
        <position position="173"/>
    </location>
</feature>
<feature type="binding site" evidence="1">
    <location>
        <position position="60"/>
    </location>
    <ligand>
        <name>S-adenosyl-L-methionine</name>
        <dbReference type="ChEBI" id="CHEBI:59789"/>
    </ligand>
</feature>
<feature type="binding site" evidence="1">
    <location>
        <position position="62"/>
    </location>
    <ligand>
        <name>S-adenosyl-L-methionine</name>
        <dbReference type="ChEBI" id="CHEBI:59789"/>
    </ligand>
</feature>
<feature type="binding site" evidence="1">
    <location>
        <position position="92"/>
    </location>
    <ligand>
        <name>S-adenosyl-L-methionine</name>
        <dbReference type="ChEBI" id="CHEBI:59789"/>
    </ligand>
</feature>
<feature type="binding site" evidence="1">
    <location>
        <position position="108"/>
    </location>
    <ligand>
        <name>S-adenosyl-L-methionine</name>
        <dbReference type="ChEBI" id="CHEBI:59789"/>
    </ligand>
</feature>
<feature type="binding site" evidence="1">
    <location>
        <position position="133"/>
    </location>
    <ligand>
        <name>S-adenosyl-L-methionine</name>
        <dbReference type="ChEBI" id="CHEBI:59789"/>
    </ligand>
</feature>
<sequence>MAKNKFNTAWLHDHINDPYVKMAQREGYRARAAYKLKEIDEQDKLIRAGQVIVDLGSTPGSWSQYARNKLAKGAQRDAEREGGIDGTIIALDLLPMEPIADVHFIQGDFREDSVIAQLEELVGERQVDLVISDMAPNLSGVAVADAARIEHLCDLALEFSQNHLKPDGALLVKCFHGSGYSQIVEKFKRQFRVVAARKPKASRDKSSETFILGKHLKRPA</sequence>
<evidence type="ECO:0000255" key="1">
    <source>
        <dbReference type="HAMAP-Rule" id="MF_01547"/>
    </source>
</evidence>
<organism>
    <name type="scientific">Paraburkholderia xenovorans (strain LB400)</name>
    <dbReference type="NCBI Taxonomy" id="266265"/>
    <lineage>
        <taxon>Bacteria</taxon>
        <taxon>Pseudomonadati</taxon>
        <taxon>Pseudomonadota</taxon>
        <taxon>Betaproteobacteria</taxon>
        <taxon>Burkholderiales</taxon>
        <taxon>Burkholderiaceae</taxon>
        <taxon>Paraburkholderia</taxon>
    </lineage>
</organism>
<gene>
    <name evidence="1" type="primary">rlmE</name>
    <name evidence="1" type="synonym">ftsJ</name>
    <name evidence="1" type="synonym">rrmJ</name>
    <name type="ordered locus">Bxeno_A3154</name>
    <name type="ORF">Bxe_A1261</name>
</gene>
<dbReference type="EC" id="2.1.1.166" evidence="1"/>
<dbReference type="EMBL" id="CP000270">
    <property type="protein sequence ID" value="ABE31692.1"/>
    <property type="molecule type" value="Genomic_DNA"/>
</dbReference>
<dbReference type="RefSeq" id="WP_011489249.1">
    <property type="nucleotide sequence ID" value="NC_007951.1"/>
</dbReference>
<dbReference type="SMR" id="Q13W47"/>
<dbReference type="STRING" id="266265.Bxe_A1261"/>
<dbReference type="KEGG" id="bxb:DR64_3419"/>
<dbReference type="KEGG" id="bxe:Bxe_A1261"/>
<dbReference type="PATRIC" id="fig|266265.5.peg.3315"/>
<dbReference type="eggNOG" id="COG0293">
    <property type="taxonomic scope" value="Bacteria"/>
</dbReference>
<dbReference type="OrthoDB" id="9790080at2"/>
<dbReference type="Proteomes" id="UP000001817">
    <property type="component" value="Chromosome 1"/>
</dbReference>
<dbReference type="GO" id="GO:0005737">
    <property type="term" value="C:cytoplasm"/>
    <property type="evidence" value="ECO:0007669"/>
    <property type="project" value="UniProtKB-SubCell"/>
</dbReference>
<dbReference type="GO" id="GO:0008650">
    <property type="term" value="F:rRNA (uridine-2'-O-)-methyltransferase activity"/>
    <property type="evidence" value="ECO:0007669"/>
    <property type="project" value="UniProtKB-UniRule"/>
</dbReference>
<dbReference type="FunFam" id="3.40.50.150:FF:000005">
    <property type="entry name" value="Ribosomal RNA large subunit methyltransferase E"/>
    <property type="match status" value="1"/>
</dbReference>
<dbReference type="Gene3D" id="3.40.50.150">
    <property type="entry name" value="Vaccinia Virus protein VP39"/>
    <property type="match status" value="1"/>
</dbReference>
<dbReference type="HAMAP" id="MF_01547">
    <property type="entry name" value="RNA_methyltr_E"/>
    <property type="match status" value="1"/>
</dbReference>
<dbReference type="InterPro" id="IPR050082">
    <property type="entry name" value="RNA_methyltr_RlmE"/>
</dbReference>
<dbReference type="InterPro" id="IPR002877">
    <property type="entry name" value="RNA_MeTrfase_FtsJ_dom"/>
</dbReference>
<dbReference type="InterPro" id="IPR015507">
    <property type="entry name" value="rRNA-MeTfrase_E"/>
</dbReference>
<dbReference type="InterPro" id="IPR029063">
    <property type="entry name" value="SAM-dependent_MTases_sf"/>
</dbReference>
<dbReference type="PANTHER" id="PTHR10920">
    <property type="entry name" value="RIBOSOMAL RNA METHYLTRANSFERASE"/>
    <property type="match status" value="1"/>
</dbReference>
<dbReference type="PANTHER" id="PTHR10920:SF18">
    <property type="entry name" value="RRNA METHYLTRANSFERASE 2, MITOCHONDRIAL"/>
    <property type="match status" value="1"/>
</dbReference>
<dbReference type="Pfam" id="PF01728">
    <property type="entry name" value="FtsJ"/>
    <property type="match status" value="1"/>
</dbReference>
<dbReference type="PIRSF" id="PIRSF005461">
    <property type="entry name" value="23S_rRNA_mtase"/>
    <property type="match status" value="1"/>
</dbReference>
<dbReference type="SUPFAM" id="SSF53335">
    <property type="entry name" value="S-adenosyl-L-methionine-dependent methyltransferases"/>
    <property type="match status" value="1"/>
</dbReference>
<reference key="1">
    <citation type="journal article" date="2006" name="Proc. Natl. Acad. Sci. U.S.A.">
        <title>Burkholderia xenovorans LB400 harbors a multi-replicon, 9.73-Mbp genome shaped for versatility.</title>
        <authorList>
            <person name="Chain P.S.G."/>
            <person name="Denef V.J."/>
            <person name="Konstantinidis K.T."/>
            <person name="Vergez L.M."/>
            <person name="Agullo L."/>
            <person name="Reyes V.L."/>
            <person name="Hauser L."/>
            <person name="Cordova M."/>
            <person name="Gomez L."/>
            <person name="Gonzalez M."/>
            <person name="Land M."/>
            <person name="Lao V."/>
            <person name="Larimer F."/>
            <person name="LiPuma J.J."/>
            <person name="Mahenthiralingam E."/>
            <person name="Malfatti S.A."/>
            <person name="Marx C.J."/>
            <person name="Parnell J.J."/>
            <person name="Ramette A."/>
            <person name="Richardson P."/>
            <person name="Seeger M."/>
            <person name="Smith D."/>
            <person name="Spilker T."/>
            <person name="Sul W.J."/>
            <person name="Tsoi T.V."/>
            <person name="Ulrich L.E."/>
            <person name="Zhulin I.B."/>
            <person name="Tiedje J.M."/>
        </authorList>
    </citation>
    <scope>NUCLEOTIDE SEQUENCE [LARGE SCALE GENOMIC DNA]</scope>
    <source>
        <strain>LB400</strain>
    </source>
</reference>
<accession>Q13W47</accession>
<protein>
    <recommendedName>
        <fullName evidence="1">Ribosomal RNA large subunit methyltransferase E</fullName>
        <ecNumber evidence="1">2.1.1.166</ecNumber>
    </recommendedName>
    <alternativeName>
        <fullName evidence="1">23S rRNA Um2552 methyltransferase</fullName>
    </alternativeName>
    <alternativeName>
        <fullName evidence="1">rRNA (uridine-2'-O-)-methyltransferase</fullName>
    </alternativeName>
</protein>
<comment type="function">
    <text evidence="1">Specifically methylates the uridine in position 2552 of 23S rRNA at the 2'-O position of the ribose in the fully assembled 50S ribosomal subunit.</text>
</comment>
<comment type="catalytic activity">
    <reaction evidence="1">
        <text>uridine(2552) in 23S rRNA + S-adenosyl-L-methionine = 2'-O-methyluridine(2552) in 23S rRNA + S-adenosyl-L-homocysteine + H(+)</text>
        <dbReference type="Rhea" id="RHEA:42720"/>
        <dbReference type="Rhea" id="RHEA-COMP:10202"/>
        <dbReference type="Rhea" id="RHEA-COMP:10203"/>
        <dbReference type="ChEBI" id="CHEBI:15378"/>
        <dbReference type="ChEBI" id="CHEBI:57856"/>
        <dbReference type="ChEBI" id="CHEBI:59789"/>
        <dbReference type="ChEBI" id="CHEBI:65315"/>
        <dbReference type="ChEBI" id="CHEBI:74478"/>
        <dbReference type="EC" id="2.1.1.166"/>
    </reaction>
</comment>
<comment type="subcellular location">
    <subcellularLocation>
        <location evidence="1">Cytoplasm</location>
    </subcellularLocation>
</comment>
<comment type="similarity">
    <text evidence="1">Belongs to the class I-like SAM-binding methyltransferase superfamily. RNA methyltransferase RlmE family.</text>
</comment>
<proteinExistence type="inferred from homology"/>